<reference key="1">
    <citation type="journal article" date="1993" name="Mech. Dev.">
        <title>Isolation of cDNAs for two closely related members of the axolotl Wnt family, Awnt-5A and Awnt-5B, and analysis of their expression during development.</title>
        <authorList>
            <person name="Busse U."/>
            <person name="Seguin C."/>
        </authorList>
    </citation>
    <scope>NUCLEOTIDE SEQUENCE [MRNA]</scope>
</reference>
<keyword id="KW-0217">Developmental protein</keyword>
<keyword id="KW-1015">Disulfide bond</keyword>
<keyword id="KW-0272">Extracellular matrix</keyword>
<keyword id="KW-0325">Glycoprotein</keyword>
<keyword id="KW-0449">Lipoprotein</keyword>
<keyword id="KW-0964">Secreted</keyword>
<keyword id="KW-0732">Signal</keyword>
<keyword id="KW-0879">Wnt signaling pathway</keyword>
<sequence>MATTHLTAALALLCALLQVDIEASSWWSLAMNPVQIPEAYIVGAQPLCSQLPGLSPGQKKLCQLYQDHMPYIGEGAKTGIKECQYQFRHRRWNCSTVDNASVFGRVMQIGSRETAFTYSISAAGVVNAVSRACREGELSTCGCSRAARPKDLQRDWLWGGCGDNLEYGYRFAKEFVDAREREKIHTKGSYESSRTLMNIHNNEAGRRTVYNLADAACKCHGVSGSCSLKTCWLQLADFRKVGDFLKEKYDSAASMRLNARGKLVQVNSRFNPPTTNDLVYVDTSPDYCVRNESTGSLGTQGRLCNKTSEGMDGCELMCCGRGYDQFKTVQTERCHCKFHWCCYVKCKKCTEIVDQFVCK</sequence>
<feature type="signal peptide" evidence="6">
    <location>
        <begin position="1"/>
        <end position="20"/>
    </location>
</feature>
<feature type="chain" id="PRO_0000041432" description="Protein Wnt-5a">
    <location>
        <begin position="21"/>
        <end position="359"/>
    </location>
</feature>
<feature type="lipid moiety-binding region" description="O-palmitoleoyl serine; by PORCN" evidence="5">
    <location>
        <position position="223"/>
    </location>
</feature>
<feature type="glycosylation site" description="N-linked (GlcNAc...) asparagine" evidence="6">
    <location>
        <position position="93"/>
    </location>
</feature>
<feature type="glycosylation site" description="N-linked (GlcNAc...) asparagine" evidence="6">
    <location>
        <position position="99"/>
    </location>
</feature>
<feature type="glycosylation site" description="N-linked (GlcNAc...) asparagine" evidence="6">
    <location>
        <position position="291"/>
    </location>
</feature>
<feature type="glycosylation site" description="N-linked (GlcNAc...) asparagine" evidence="6">
    <location>
        <position position="305"/>
    </location>
</feature>
<feature type="disulfide bond" evidence="3">
    <location>
        <begin position="83"/>
        <end position="94"/>
    </location>
</feature>
<feature type="disulfide bond" evidence="3">
    <location>
        <begin position="133"/>
        <end position="141"/>
    </location>
</feature>
<feature type="disulfide bond" evidence="3">
    <location>
        <begin position="143"/>
        <end position="161"/>
    </location>
</feature>
<feature type="disulfide bond" evidence="3">
    <location>
        <begin position="217"/>
        <end position="231"/>
    </location>
</feature>
<feature type="disulfide bond" evidence="3">
    <location>
        <begin position="219"/>
        <end position="226"/>
    </location>
</feature>
<feature type="disulfide bond" evidence="3">
    <location>
        <begin position="288"/>
        <end position="319"/>
    </location>
</feature>
<feature type="disulfide bond" evidence="3">
    <location>
        <begin position="304"/>
        <end position="314"/>
    </location>
</feature>
<feature type="disulfide bond" evidence="3">
    <location>
        <begin position="318"/>
        <end position="358"/>
    </location>
</feature>
<feature type="disulfide bond" evidence="3">
    <location>
        <begin position="334"/>
        <end position="349"/>
    </location>
</feature>
<feature type="disulfide bond" evidence="3">
    <location>
        <begin position="336"/>
        <end position="346"/>
    </location>
</feature>
<feature type="disulfide bond" evidence="3">
    <location>
        <begin position="341"/>
        <end position="342"/>
    </location>
</feature>
<gene>
    <name type="primary">WNT-5A</name>
</gene>
<proteinExistence type="evidence at transcript level"/>
<comment type="function">
    <text evidence="1">Ligand for members of the frizzled family of seven transmembrane receptors. Can activate or inhibit canonical Wnt signaling, depending on receptor context. Required during embryogenesis for extension of the primary anterior-posterior axis.</text>
</comment>
<comment type="subcellular location">
    <subcellularLocation>
        <location evidence="4">Secreted</location>
        <location evidence="4">Extracellular space</location>
        <location evidence="4">Extracellular matrix</location>
    </subcellularLocation>
    <subcellularLocation>
        <location evidence="4">Secreted</location>
    </subcellularLocation>
</comment>
<comment type="tissue specificity">
    <text>Neuroectodermal and non-neuroectodermal tissues.</text>
</comment>
<comment type="developmental stage">
    <text>Abundant in the blastula until gastrulation, barely detectable during gastrulation, and increase again during neurulation. Detected throughout the remaining development and in hatched larvae.</text>
</comment>
<comment type="PTM">
    <text evidence="2 5">Palmitoleoylation is required for efficient binding to frizzled receptors. Depalmitoleoylation leads to Wnt signaling pathway inhibition.</text>
</comment>
<comment type="similarity">
    <text evidence="7">Belongs to the Wnt family.</text>
</comment>
<protein>
    <recommendedName>
        <fullName>Protein Wnt-5a</fullName>
    </recommendedName>
</protein>
<accession>Q06442</accession>
<dbReference type="EMBL" id="Z14047">
    <property type="protein sequence ID" value="CAA78415.1"/>
    <property type="molecule type" value="mRNA"/>
</dbReference>
<dbReference type="PIR" id="A56549">
    <property type="entry name" value="A56549"/>
</dbReference>
<dbReference type="SMR" id="Q06442"/>
<dbReference type="GlyCosmos" id="Q06442">
    <property type="glycosylation" value="4 sites, No reported glycans"/>
</dbReference>
<dbReference type="GO" id="GO:0005615">
    <property type="term" value="C:extracellular space"/>
    <property type="evidence" value="ECO:0007669"/>
    <property type="project" value="TreeGrafter"/>
</dbReference>
<dbReference type="GO" id="GO:0005125">
    <property type="term" value="F:cytokine activity"/>
    <property type="evidence" value="ECO:0007669"/>
    <property type="project" value="TreeGrafter"/>
</dbReference>
<dbReference type="GO" id="GO:0005109">
    <property type="term" value="F:frizzled binding"/>
    <property type="evidence" value="ECO:0007669"/>
    <property type="project" value="TreeGrafter"/>
</dbReference>
<dbReference type="GO" id="GO:0060070">
    <property type="term" value="P:canonical Wnt signaling pathway"/>
    <property type="evidence" value="ECO:0007669"/>
    <property type="project" value="TreeGrafter"/>
</dbReference>
<dbReference type="GO" id="GO:0045165">
    <property type="term" value="P:cell fate commitment"/>
    <property type="evidence" value="ECO:0007669"/>
    <property type="project" value="TreeGrafter"/>
</dbReference>
<dbReference type="GO" id="GO:0030182">
    <property type="term" value="P:neuron differentiation"/>
    <property type="evidence" value="ECO:0007669"/>
    <property type="project" value="TreeGrafter"/>
</dbReference>
<dbReference type="CDD" id="cd19347">
    <property type="entry name" value="Wnt_Wnt5a"/>
    <property type="match status" value="1"/>
</dbReference>
<dbReference type="FunFam" id="3.30.2460.20:FF:000001">
    <property type="entry name" value="Wnt homolog"/>
    <property type="match status" value="1"/>
</dbReference>
<dbReference type="Gene3D" id="3.30.2460.20">
    <property type="match status" value="1"/>
</dbReference>
<dbReference type="InterPro" id="IPR005817">
    <property type="entry name" value="Wnt"/>
</dbReference>
<dbReference type="InterPro" id="IPR043158">
    <property type="entry name" value="Wnt_C"/>
</dbReference>
<dbReference type="InterPro" id="IPR018161">
    <property type="entry name" value="Wnt_CS"/>
</dbReference>
<dbReference type="PANTHER" id="PTHR12027:SF33">
    <property type="entry name" value="PROTEIN WNT-5A"/>
    <property type="match status" value="1"/>
</dbReference>
<dbReference type="PANTHER" id="PTHR12027">
    <property type="entry name" value="WNT RELATED"/>
    <property type="match status" value="1"/>
</dbReference>
<dbReference type="Pfam" id="PF00110">
    <property type="entry name" value="wnt"/>
    <property type="match status" value="1"/>
</dbReference>
<dbReference type="PRINTS" id="PR01349">
    <property type="entry name" value="WNTPROTEIN"/>
</dbReference>
<dbReference type="SMART" id="SM00097">
    <property type="entry name" value="WNT1"/>
    <property type="match status" value="1"/>
</dbReference>
<dbReference type="PROSITE" id="PS00246">
    <property type="entry name" value="WNT1"/>
    <property type="match status" value="1"/>
</dbReference>
<evidence type="ECO:0000250" key="1">
    <source>
        <dbReference type="UniProtKB" id="P22725"/>
    </source>
</evidence>
<evidence type="ECO:0000250" key="2">
    <source>
        <dbReference type="UniProtKB" id="P27467"/>
    </source>
</evidence>
<evidence type="ECO:0000250" key="3">
    <source>
        <dbReference type="UniProtKB" id="P28026"/>
    </source>
</evidence>
<evidence type="ECO:0000250" key="4">
    <source>
        <dbReference type="UniProtKB" id="P41221"/>
    </source>
</evidence>
<evidence type="ECO:0000250" key="5">
    <source>
        <dbReference type="UniProtKB" id="P56704"/>
    </source>
</evidence>
<evidence type="ECO:0000255" key="6"/>
<evidence type="ECO:0000305" key="7"/>
<organism>
    <name type="scientific">Ambystoma mexicanum</name>
    <name type="common">Axolotl</name>
    <dbReference type="NCBI Taxonomy" id="8296"/>
    <lineage>
        <taxon>Eukaryota</taxon>
        <taxon>Metazoa</taxon>
        <taxon>Chordata</taxon>
        <taxon>Craniata</taxon>
        <taxon>Vertebrata</taxon>
        <taxon>Euteleostomi</taxon>
        <taxon>Amphibia</taxon>
        <taxon>Batrachia</taxon>
        <taxon>Caudata</taxon>
        <taxon>Salamandroidea</taxon>
        <taxon>Ambystomatidae</taxon>
        <taxon>Ambystoma</taxon>
    </lineage>
</organism>
<name>WNT5A_AMBME</name>